<gene>
    <name type="primary">ihfB</name>
    <name type="synonym">himD</name>
    <name type="ordered locus">Z1258</name>
    <name type="ordered locus">ECs0995</name>
</gene>
<sequence>MTKSELIERLATQQSHIPAKTVEDAVKEMLEHMASTLAQGERIEIRGFGSFSLHYRAPRTGRNPKTGDKVELEGKYVPHFKPGKELRDRANIYG</sequence>
<accession>P0A6Y3</accession>
<accession>P08756</accession>
<feature type="chain" id="PRO_0000105050" description="Integration host factor subunit beta">
    <location>
        <begin position="1"/>
        <end position="94"/>
    </location>
</feature>
<reference key="1">
    <citation type="journal article" date="2001" name="Nature">
        <title>Genome sequence of enterohaemorrhagic Escherichia coli O157:H7.</title>
        <authorList>
            <person name="Perna N.T."/>
            <person name="Plunkett G. III"/>
            <person name="Burland V."/>
            <person name="Mau B."/>
            <person name="Glasner J.D."/>
            <person name="Rose D.J."/>
            <person name="Mayhew G.F."/>
            <person name="Evans P.S."/>
            <person name="Gregor J."/>
            <person name="Kirkpatrick H.A."/>
            <person name="Posfai G."/>
            <person name="Hackett J."/>
            <person name="Klink S."/>
            <person name="Boutin A."/>
            <person name="Shao Y."/>
            <person name="Miller L."/>
            <person name="Grotbeck E.J."/>
            <person name="Davis N.W."/>
            <person name="Lim A."/>
            <person name="Dimalanta E.T."/>
            <person name="Potamousis K."/>
            <person name="Apodaca J."/>
            <person name="Anantharaman T.S."/>
            <person name="Lin J."/>
            <person name="Yen G."/>
            <person name="Schwartz D.C."/>
            <person name="Welch R.A."/>
            <person name="Blattner F.R."/>
        </authorList>
    </citation>
    <scope>NUCLEOTIDE SEQUENCE [LARGE SCALE GENOMIC DNA]</scope>
    <source>
        <strain>O157:H7 / EDL933 / ATCC 700927 / EHEC</strain>
    </source>
</reference>
<reference key="2">
    <citation type="journal article" date="2001" name="DNA Res.">
        <title>Complete genome sequence of enterohemorrhagic Escherichia coli O157:H7 and genomic comparison with a laboratory strain K-12.</title>
        <authorList>
            <person name="Hayashi T."/>
            <person name="Makino K."/>
            <person name="Ohnishi M."/>
            <person name="Kurokawa K."/>
            <person name="Ishii K."/>
            <person name="Yokoyama K."/>
            <person name="Han C.-G."/>
            <person name="Ohtsubo E."/>
            <person name="Nakayama K."/>
            <person name="Murata T."/>
            <person name="Tanaka M."/>
            <person name="Tobe T."/>
            <person name="Iida T."/>
            <person name="Takami H."/>
            <person name="Honda T."/>
            <person name="Sasakawa C."/>
            <person name="Ogasawara N."/>
            <person name="Yasunaga T."/>
            <person name="Kuhara S."/>
            <person name="Shiba T."/>
            <person name="Hattori M."/>
            <person name="Shinagawa H."/>
        </authorList>
    </citation>
    <scope>NUCLEOTIDE SEQUENCE [LARGE SCALE GENOMIC DNA]</scope>
    <source>
        <strain>O157:H7 / Sakai / RIMD 0509952 / EHEC</strain>
    </source>
</reference>
<keyword id="KW-0233">DNA recombination</keyword>
<keyword id="KW-0238">DNA-binding</keyword>
<keyword id="KW-1185">Reference proteome</keyword>
<keyword id="KW-0804">Transcription</keyword>
<keyword id="KW-0805">Transcription regulation</keyword>
<keyword id="KW-0810">Translation regulation</keyword>
<evidence type="ECO:0000250" key="1"/>
<evidence type="ECO:0000305" key="2"/>
<name>IHFB_ECO57</name>
<dbReference type="EMBL" id="AE005174">
    <property type="protein sequence ID" value="AAG55397.1"/>
    <property type="molecule type" value="Genomic_DNA"/>
</dbReference>
<dbReference type="EMBL" id="BA000007">
    <property type="protein sequence ID" value="BAB34418.1"/>
    <property type="molecule type" value="Genomic_DNA"/>
</dbReference>
<dbReference type="PIR" id="A85617">
    <property type="entry name" value="A85617"/>
</dbReference>
<dbReference type="PIR" id="C90753">
    <property type="entry name" value="C90753"/>
</dbReference>
<dbReference type="RefSeq" id="NP_309022.1">
    <property type="nucleotide sequence ID" value="NC_002695.1"/>
</dbReference>
<dbReference type="RefSeq" id="WP_000167336.1">
    <property type="nucleotide sequence ID" value="NZ_VOAI01000006.1"/>
</dbReference>
<dbReference type="SMR" id="P0A6Y3"/>
<dbReference type="STRING" id="155864.Z1258"/>
<dbReference type="GeneID" id="917740"/>
<dbReference type="GeneID" id="93776505"/>
<dbReference type="KEGG" id="ece:Z1258"/>
<dbReference type="KEGG" id="ecs:ECs_0995"/>
<dbReference type="PATRIC" id="fig|386585.9.peg.1115"/>
<dbReference type="eggNOG" id="COG0776">
    <property type="taxonomic scope" value="Bacteria"/>
</dbReference>
<dbReference type="HOGENOM" id="CLU_105066_2_0_6"/>
<dbReference type="OMA" id="DQKSVPF"/>
<dbReference type="Proteomes" id="UP000000558">
    <property type="component" value="Chromosome"/>
</dbReference>
<dbReference type="Proteomes" id="UP000002519">
    <property type="component" value="Chromosome"/>
</dbReference>
<dbReference type="GO" id="GO:0005694">
    <property type="term" value="C:chromosome"/>
    <property type="evidence" value="ECO:0007669"/>
    <property type="project" value="InterPro"/>
</dbReference>
<dbReference type="GO" id="GO:0005829">
    <property type="term" value="C:cytosol"/>
    <property type="evidence" value="ECO:0007669"/>
    <property type="project" value="TreeGrafter"/>
</dbReference>
<dbReference type="GO" id="GO:0003677">
    <property type="term" value="F:DNA binding"/>
    <property type="evidence" value="ECO:0007669"/>
    <property type="project" value="UniProtKB-UniRule"/>
</dbReference>
<dbReference type="GO" id="GO:0030527">
    <property type="term" value="F:structural constituent of chromatin"/>
    <property type="evidence" value="ECO:0007669"/>
    <property type="project" value="InterPro"/>
</dbReference>
<dbReference type="GO" id="GO:0006310">
    <property type="term" value="P:DNA recombination"/>
    <property type="evidence" value="ECO:0007669"/>
    <property type="project" value="UniProtKB-UniRule"/>
</dbReference>
<dbReference type="GO" id="GO:0006355">
    <property type="term" value="P:regulation of DNA-templated transcription"/>
    <property type="evidence" value="ECO:0007669"/>
    <property type="project" value="UniProtKB-UniRule"/>
</dbReference>
<dbReference type="GO" id="GO:0006417">
    <property type="term" value="P:regulation of translation"/>
    <property type="evidence" value="ECO:0007669"/>
    <property type="project" value="UniProtKB-UniRule"/>
</dbReference>
<dbReference type="CDD" id="cd13836">
    <property type="entry name" value="IHF_B"/>
    <property type="match status" value="1"/>
</dbReference>
<dbReference type="FunFam" id="4.10.520.10:FF:000003">
    <property type="entry name" value="Integration host factor subunit beta"/>
    <property type="match status" value="1"/>
</dbReference>
<dbReference type="Gene3D" id="4.10.520.10">
    <property type="entry name" value="IHF-like DNA-binding proteins"/>
    <property type="match status" value="1"/>
</dbReference>
<dbReference type="HAMAP" id="MF_00381">
    <property type="entry name" value="IHF_beta"/>
    <property type="match status" value="1"/>
</dbReference>
<dbReference type="InterPro" id="IPR000119">
    <property type="entry name" value="Hist_DNA-bd"/>
</dbReference>
<dbReference type="InterPro" id="IPR020816">
    <property type="entry name" value="Histone-like_DNA-bd_CS"/>
</dbReference>
<dbReference type="InterPro" id="IPR010992">
    <property type="entry name" value="IHF-like_DNA-bd_dom_sf"/>
</dbReference>
<dbReference type="InterPro" id="IPR005685">
    <property type="entry name" value="IHF_beta"/>
</dbReference>
<dbReference type="NCBIfam" id="TIGR00988">
    <property type="entry name" value="hip"/>
    <property type="match status" value="1"/>
</dbReference>
<dbReference type="NCBIfam" id="NF001222">
    <property type="entry name" value="PRK00199.1"/>
    <property type="match status" value="1"/>
</dbReference>
<dbReference type="PANTHER" id="PTHR33175">
    <property type="entry name" value="DNA-BINDING PROTEIN HU"/>
    <property type="match status" value="1"/>
</dbReference>
<dbReference type="PANTHER" id="PTHR33175:SF5">
    <property type="entry name" value="INTEGRATION HOST FACTOR SUBUNIT BETA"/>
    <property type="match status" value="1"/>
</dbReference>
<dbReference type="Pfam" id="PF00216">
    <property type="entry name" value="Bac_DNA_binding"/>
    <property type="match status" value="1"/>
</dbReference>
<dbReference type="PRINTS" id="PR01727">
    <property type="entry name" value="DNABINDINGHU"/>
</dbReference>
<dbReference type="SMART" id="SM00411">
    <property type="entry name" value="BHL"/>
    <property type="match status" value="1"/>
</dbReference>
<dbReference type="SUPFAM" id="SSF47729">
    <property type="entry name" value="IHF-like DNA-binding proteins"/>
    <property type="match status" value="1"/>
</dbReference>
<dbReference type="PROSITE" id="PS00045">
    <property type="entry name" value="HISTONE_LIKE"/>
    <property type="match status" value="1"/>
</dbReference>
<protein>
    <recommendedName>
        <fullName>Integration host factor subunit beta</fullName>
        <shortName>IHF-beta</shortName>
    </recommendedName>
</protein>
<organism>
    <name type="scientific">Escherichia coli O157:H7</name>
    <dbReference type="NCBI Taxonomy" id="83334"/>
    <lineage>
        <taxon>Bacteria</taxon>
        <taxon>Pseudomonadati</taxon>
        <taxon>Pseudomonadota</taxon>
        <taxon>Gammaproteobacteria</taxon>
        <taxon>Enterobacterales</taxon>
        <taxon>Enterobacteriaceae</taxon>
        <taxon>Escherichia</taxon>
    </lineage>
</organism>
<comment type="function">
    <text evidence="1">This protein is one of the two subunits of integration host factor, a specific DNA-binding protein that functions in genetic recombination as well as in transcriptional and translational control.</text>
</comment>
<comment type="subunit">
    <text evidence="1">Heterodimer of an alpha and a beta chain.</text>
</comment>
<comment type="similarity">
    <text evidence="2">Belongs to the bacterial histone-like protein family.</text>
</comment>
<proteinExistence type="inferred from homology"/>